<keyword id="KW-0903">Direct protein sequencing</keyword>
<keyword id="KW-1015">Disulfide bond</keyword>
<keyword id="KW-0325">Glycoprotein</keyword>
<keyword id="KW-0646">Protease inhibitor</keyword>
<keyword id="KW-0964">Secreted</keyword>
<keyword id="KW-0722">Serine protease inhibitor</keyword>
<keyword id="KW-0765">Sulfation</keyword>
<accession>P84590</accession>
<sequence length="63" mass="6657">VVYTDCTESGQNLCLCEGSNVCGQGNKCILGSDGEKNQCVTGEGTPGPQSHNDGDFEEPEEYL</sequence>
<dbReference type="SMR" id="P84590"/>
<dbReference type="GO" id="GO:0005576">
    <property type="term" value="C:extracellular region"/>
    <property type="evidence" value="ECO:0007669"/>
    <property type="project" value="UniProtKB-SubCell"/>
</dbReference>
<dbReference type="GO" id="GO:0004867">
    <property type="term" value="F:serine-type endopeptidase inhibitor activity"/>
    <property type="evidence" value="ECO:0007669"/>
    <property type="project" value="UniProtKB-KW"/>
</dbReference>
<dbReference type="FunFam" id="2.70.10.10:FF:000001">
    <property type="entry name" value="Hirudin variant-1"/>
    <property type="match status" value="1"/>
</dbReference>
<dbReference type="Gene3D" id="2.70.10.10">
    <property type="entry name" value="Thrombin Inhibitor (Hirudin), subunit I"/>
    <property type="match status" value="1"/>
</dbReference>
<dbReference type="InterPro" id="IPR024793">
    <property type="entry name" value="Hirudin"/>
</dbReference>
<dbReference type="InterPro" id="IPR011061">
    <property type="entry name" value="Hirudin/antistatin"/>
</dbReference>
<dbReference type="InterPro" id="IPR000429">
    <property type="entry name" value="Prot_inh_hirudin"/>
</dbReference>
<dbReference type="Pfam" id="PF00713">
    <property type="entry name" value="Hirudin"/>
    <property type="match status" value="1"/>
</dbReference>
<dbReference type="PIRSF" id="PIRSF001640">
    <property type="entry name" value="Hirudin"/>
    <property type="match status" value="1"/>
</dbReference>
<dbReference type="PRINTS" id="PR00777">
    <property type="entry name" value="HIRUDIN"/>
</dbReference>
<dbReference type="SUPFAM" id="SSF57262">
    <property type="entry name" value="Leech antihemostatic proteins"/>
    <property type="match status" value="1"/>
</dbReference>
<reference evidence="5" key="1">
    <citation type="journal article" date="2005" name="J. Comp. Toxicol. Physiol.">
        <title>Prediction of antigenic epitope of hirudin from Poecilobdella viridis.</title>
        <authorList>
            <person name="Vankhede G.N."/>
            <person name="Gomase V.S."/>
            <person name="Deshmukh S.V."/>
            <person name="Chikhale N.J."/>
        </authorList>
    </citation>
    <scope>PROTEIN SEQUENCE</scope>
    <scope>SUBCELLULAR LOCATION</scope>
    <source>
        <tissue evidence="4">Saliva</tissue>
    </source>
</reference>
<name>HIRUD_POEVI</name>
<evidence type="ECO:0000250" key="1"/>
<evidence type="ECO:0000250" key="2">
    <source>
        <dbReference type="UniProtKB" id="P01050"/>
    </source>
</evidence>
<evidence type="ECO:0000256" key="3">
    <source>
        <dbReference type="SAM" id="MobiDB-lite"/>
    </source>
</evidence>
<evidence type="ECO:0000269" key="4">
    <source ref="1"/>
</evidence>
<evidence type="ECO:0000305" key="5"/>
<comment type="function">
    <text evidence="5">Hirudin is a potent thrombin-specific protease inhibitor. It forms a stable non-covalent complex with alpha-thrombin, thereby abolishing its ability to cleave fibrinogen.</text>
</comment>
<comment type="subcellular location">
    <subcellularLocation>
        <location evidence="4">Secreted</location>
    </subcellularLocation>
</comment>
<comment type="similarity">
    <text evidence="5">Belongs to the protease inhibitor I14 (hirudin) family.</text>
</comment>
<feature type="chain" id="PRO_0000195654" description="Hirudin">
    <location>
        <begin position="1"/>
        <end position="63"/>
    </location>
</feature>
<feature type="region of interest" description="Interaction with thrombin active site" evidence="1">
    <location>
        <begin position="1"/>
        <end position="3"/>
    </location>
</feature>
<feature type="region of interest" description="Disordered" evidence="3">
    <location>
        <begin position="39"/>
        <end position="63"/>
    </location>
</feature>
<feature type="region of interest" description="Interaction with fibrinogen-binding exosite of thrombin" evidence="1">
    <location>
        <begin position="55"/>
        <end position="63"/>
    </location>
</feature>
<feature type="modified residue" description="Sulfotyrosine" evidence="2">
    <location>
        <position position="62"/>
    </location>
</feature>
<feature type="glycosylation site" description="O-linked (GalNAc...) threonine" evidence="1">
    <location>
        <position position="45"/>
    </location>
</feature>
<feature type="disulfide bond" evidence="2">
    <location>
        <begin position="6"/>
        <end position="14"/>
    </location>
</feature>
<feature type="disulfide bond" evidence="2">
    <location>
        <begin position="16"/>
        <end position="28"/>
    </location>
</feature>
<feature type="disulfide bond" evidence="2">
    <location>
        <begin position="22"/>
        <end position="39"/>
    </location>
</feature>
<proteinExistence type="evidence at protein level"/>
<protein>
    <recommendedName>
        <fullName>Hirudin</fullName>
    </recommendedName>
</protein>
<organism>
    <name type="scientific">Poecilobdella viridis</name>
    <name type="common">Indian freshwater leech</name>
    <dbReference type="NCBI Taxonomy" id="335439"/>
    <lineage>
        <taxon>Eukaryota</taxon>
        <taxon>Metazoa</taxon>
        <taxon>Spiralia</taxon>
        <taxon>Lophotrochozoa</taxon>
        <taxon>Annelida</taxon>
        <taxon>Clitellata</taxon>
        <taxon>Hirudinea</taxon>
        <taxon>Hirudinida</taxon>
        <taxon>Hirudiniformes</taxon>
        <taxon>Hirudinidae</taxon>
        <taxon>Poecilobdella</taxon>
    </lineage>
</organism>